<sequence>MARYFRRRKFCRFTAEGVVEIDYKDIATLKNYITESGKIVPSRITGTRAKYQRQLARCIKRARYLSLLPYTDRHQ</sequence>
<feature type="chain" id="PRO_1000114470" description="Small ribosomal subunit protein bS18">
    <location>
        <begin position="1"/>
        <end position="75"/>
    </location>
</feature>
<keyword id="KW-0687">Ribonucleoprotein</keyword>
<keyword id="KW-0689">Ribosomal protein</keyword>
<keyword id="KW-0694">RNA-binding</keyword>
<keyword id="KW-0699">rRNA-binding</keyword>
<accession>B2K2L5</accession>
<name>RS18_YERPB</name>
<organism>
    <name type="scientific">Yersinia pseudotuberculosis serotype IB (strain PB1/+)</name>
    <dbReference type="NCBI Taxonomy" id="502801"/>
    <lineage>
        <taxon>Bacteria</taxon>
        <taxon>Pseudomonadati</taxon>
        <taxon>Pseudomonadota</taxon>
        <taxon>Gammaproteobacteria</taxon>
        <taxon>Enterobacterales</taxon>
        <taxon>Yersiniaceae</taxon>
        <taxon>Yersinia</taxon>
    </lineage>
</organism>
<gene>
    <name evidence="1" type="primary">rpsR</name>
    <name type="ordered locus">YPTS_0470</name>
</gene>
<comment type="function">
    <text evidence="1">Binds as a heterodimer with protein bS6 to the central domain of the 16S rRNA, where it helps stabilize the platform of the 30S subunit.</text>
</comment>
<comment type="subunit">
    <text evidence="1">Part of the 30S ribosomal subunit. Forms a tight heterodimer with protein bS6.</text>
</comment>
<comment type="similarity">
    <text evidence="1">Belongs to the bacterial ribosomal protein bS18 family.</text>
</comment>
<reference key="1">
    <citation type="submission" date="2008-04" db="EMBL/GenBank/DDBJ databases">
        <title>Complete sequence of Yersinia pseudotuberculosis PB1/+.</title>
        <authorList>
            <person name="Copeland A."/>
            <person name="Lucas S."/>
            <person name="Lapidus A."/>
            <person name="Glavina del Rio T."/>
            <person name="Dalin E."/>
            <person name="Tice H."/>
            <person name="Bruce D."/>
            <person name="Goodwin L."/>
            <person name="Pitluck S."/>
            <person name="Munk A.C."/>
            <person name="Brettin T."/>
            <person name="Detter J.C."/>
            <person name="Han C."/>
            <person name="Tapia R."/>
            <person name="Schmutz J."/>
            <person name="Larimer F."/>
            <person name="Land M."/>
            <person name="Hauser L."/>
            <person name="Challacombe J.F."/>
            <person name="Green L."/>
            <person name="Lindler L.E."/>
            <person name="Nikolich M.P."/>
            <person name="Richardson P."/>
        </authorList>
    </citation>
    <scope>NUCLEOTIDE SEQUENCE [LARGE SCALE GENOMIC DNA]</scope>
    <source>
        <strain>PB1/+</strain>
    </source>
</reference>
<evidence type="ECO:0000255" key="1">
    <source>
        <dbReference type="HAMAP-Rule" id="MF_00270"/>
    </source>
</evidence>
<evidence type="ECO:0000305" key="2"/>
<dbReference type="EMBL" id="CP001048">
    <property type="protein sequence ID" value="ACC87456.1"/>
    <property type="molecule type" value="Genomic_DNA"/>
</dbReference>
<dbReference type="RefSeq" id="WP_002210155.1">
    <property type="nucleotide sequence ID" value="NZ_CP009780.1"/>
</dbReference>
<dbReference type="SMR" id="B2K2L5"/>
<dbReference type="GeneID" id="98391335"/>
<dbReference type="KEGG" id="ypb:YPTS_0470"/>
<dbReference type="PATRIC" id="fig|502801.10.peg.4143"/>
<dbReference type="GO" id="GO:0022627">
    <property type="term" value="C:cytosolic small ribosomal subunit"/>
    <property type="evidence" value="ECO:0007669"/>
    <property type="project" value="TreeGrafter"/>
</dbReference>
<dbReference type="GO" id="GO:0070181">
    <property type="term" value="F:small ribosomal subunit rRNA binding"/>
    <property type="evidence" value="ECO:0007669"/>
    <property type="project" value="TreeGrafter"/>
</dbReference>
<dbReference type="GO" id="GO:0003735">
    <property type="term" value="F:structural constituent of ribosome"/>
    <property type="evidence" value="ECO:0007669"/>
    <property type="project" value="InterPro"/>
</dbReference>
<dbReference type="GO" id="GO:0006412">
    <property type="term" value="P:translation"/>
    <property type="evidence" value="ECO:0007669"/>
    <property type="project" value="UniProtKB-UniRule"/>
</dbReference>
<dbReference type="FunFam" id="4.10.640.10:FF:000001">
    <property type="entry name" value="30S ribosomal protein S18"/>
    <property type="match status" value="1"/>
</dbReference>
<dbReference type="Gene3D" id="4.10.640.10">
    <property type="entry name" value="Ribosomal protein S18"/>
    <property type="match status" value="1"/>
</dbReference>
<dbReference type="HAMAP" id="MF_00270">
    <property type="entry name" value="Ribosomal_bS18"/>
    <property type="match status" value="1"/>
</dbReference>
<dbReference type="InterPro" id="IPR001648">
    <property type="entry name" value="Ribosomal_bS18"/>
</dbReference>
<dbReference type="InterPro" id="IPR018275">
    <property type="entry name" value="Ribosomal_bS18_CS"/>
</dbReference>
<dbReference type="InterPro" id="IPR036870">
    <property type="entry name" value="Ribosomal_bS18_sf"/>
</dbReference>
<dbReference type="NCBIfam" id="TIGR00165">
    <property type="entry name" value="S18"/>
    <property type="match status" value="1"/>
</dbReference>
<dbReference type="PANTHER" id="PTHR13479">
    <property type="entry name" value="30S RIBOSOMAL PROTEIN S18"/>
    <property type="match status" value="1"/>
</dbReference>
<dbReference type="PANTHER" id="PTHR13479:SF40">
    <property type="entry name" value="SMALL RIBOSOMAL SUBUNIT PROTEIN BS18M"/>
    <property type="match status" value="1"/>
</dbReference>
<dbReference type="Pfam" id="PF01084">
    <property type="entry name" value="Ribosomal_S18"/>
    <property type="match status" value="1"/>
</dbReference>
<dbReference type="PRINTS" id="PR00974">
    <property type="entry name" value="RIBOSOMALS18"/>
</dbReference>
<dbReference type="SUPFAM" id="SSF46911">
    <property type="entry name" value="Ribosomal protein S18"/>
    <property type="match status" value="1"/>
</dbReference>
<dbReference type="PROSITE" id="PS00057">
    <property type="entry name" value="RIBOSOMAL_S18"/>
    <property type="match status" value="1"/>
</dbReference>
<protein>
    <recommendedName>
        <fullName evidence="1">Small ribosomal subunit protein bS18</fullName>
    </recommendedName>
    <alternativeName>
        <fullName evidence="2">30S ribosomal protein S18</fullName>
    </alternativeName>
</protein>
<proteinExistence type="inferred from homology"/>